<evidence type="ECO:0000250" key="1"/>
<evidence type="ECO:0000256" key="2">
    <source>
        <dbReference type="SAM" id="MobiDB-lite"/>
    </source>
</evidence>
<evidence type="ECO:0000305" key="3"/>
<organism>
    <name type="scientific">Saccharomyces cerevisiae (strain JAY291)</name>
    <name type="common">Baker's yeast</name>
    <dbReference type="NCBI Taxonomy" id="574961"/>
    <lineage>
        <taxon>Eukaryota</taxon>
        <taxon>Fungi</taxon>
        <taxon>Dikarya</taxon>
        <taxon>Ascomycota</taxon>
        <taxon>Saccharomycotina</taxon>
        <taxon>Saccharomycetes</taxon>
        <taxon>Saccharomycetales</taxon>
        <taxon>Saccharomycetaceae</taxon>
        <taxon>Saccharomyces</taxon>
    </lineage>
</organism>
<protein>
    <recommendedName>
        <fullName>Oxidant-induced cell-cycle arrest protein 5</fullName>
    </recommendedName>
</protein>
<name>OCA5_YEAS2</name>
<keyword id="KW-0963">Cytoplasm</keyword>
<sequence>MHDKKSPMANSHYLKNLKQQFRNKNLIETTIHLVKCNDHDSLAFLARTYGVPPQLRHVVWPILLKYHPMCISPNITSNTISWDPITNDFILNDPFLKSKAPTDKQDKSDDENILPYDIESIILHDLKKYFHSRSNPAGSSSNANTTNIATPTPVSSSDASTISSMEVLSPSLDYEFQIIETLKNAIVKFLLKWSKIFKYENGLAWIALGLAEWYPIYPYETMSPFNETHSFYEVEDYVVLSGRKHALLSTNNGNNGNSNSSSNNTNNNNTNITSGMHNLSINTNTSLHNSPYISHTLSYLYKEYPLPFELRSKLPTKPIFSFSALFERLALVILHCPDTILAHKQLKNDSNASSSSKANSNFNTNYFPIISGGDLSFQTQVFFKVFSSILPELYQPLTEESSLQPSSSRNSWIYWWLKCSGAKALQRQDRGRVWDLLLGWRPKPNMDTINFFLNYNDKKMDHLYHDTPQCDNEQYWMKDWIALYNNDPFWFPDLDSMALGSKKFPYDYSVFKELILRNRYGGTQSKAQKDNTVPSPGSDSNDKSELKLPFSSIDPHMQLIFIFIAILQFNEFKLLEFEEAEISEFLNNVPLLTKFDDSSYRKLYENTESSITSLPSSPTTSTMASLQSSSNSSAHISNYHMLIEVGNDAKASHCFDDLLNMAGDIWRKWLWRELEESSL</sequence>
<dbReference type="EMBL" id="ACFL01000003">
    <property type="protein sequence ID" value="EEU09299.1"/>
    <property type="molecule type" value="Genomic_DNA"/>
</dbReference>
<dbReference type="Proteomes" id="UP000008073">
    <property type="component" value="Unassembled WGS sequence"/>
</dbReference>
<dbReference type="GO" id="GO:0005737">
    <property type="term" value="C:cytoplasm"/>
    <property type="evidence" value="ECO:0007669"/>
    <property type="project" value="UniProtKB-SubCell"/>
</dbReference>
<dbReference type="Gene3D" id="1.10.472.80">
    <property type="entry name" value="Ypt/Rab-GAP domain of gyp1p, domain 3"/>
    <property type="match status" value="1"/>
</dbReference>
<dbReference type="InterPro" id="IPR000195">
    <property type="entry name" value="Rab-GAP-TBC_dom"/>
</dbReference>
<dbReference type="InterPro" id="IPR035969">
    <property type="entry name" value="Rab-GAP_TBC_sf"/>
</dbReference>
<dbReference type="SMART" id="SM00164">
    <property type="entry name" value="TBC"/>
    <property type="match status" value="1"/>
</dbReference>
<dbReference type="SUPFAM" id="SSF47923">
    <property type="entry name" value="Ypt/Rab-GAP domain of gyp1p"/>
    <property type="match status" value="1"/>
</dbReference>
<comment type="function">
    <text evidence="1">Required for replication of brome mosaic virus (BMV), a positive-strand RNA virus.</text>
</comment>
<comment type="subcellular location">
    <subcellularLocation>
        <location evidence="1">Cytoplasm</location>
    </subcellularLocation>
</comment>
<comment type="similarity">
    <text evidence="3">Belongs to the OCA5 family.</text>
</comment>
<accession>C7GIQ7</accession>
<feature type="chain" id="PRO_0000408218" description="Oxidant-induced cell-cycle arrest protein 5">
    <location>
        <begin position="1"/>
        <end position="679"/>
    </location>
</feature>
<feature type="domain" description="Rab-GAP TBC">
    <location>
        <begin position="50"/>
        <end position="441"/>
    </location>
</feature>
<feature type="region of interest" description="Disordered" evidence="2">
    <location>
        <begin position="135"/>
        <end position="159"/>
    </location>
</feature>
<feature type="region of interest" description="Disordered" evidence="2">
    <location>
        <begin position="250"/>
        <end position="270"/>
    </location>
</feature>
<feature type="region of interest" description="Disordered" evidence="2">
    <location>
        <begin position="524"/>
        <end position="544"/>
    </location>
</feature>
<feature type="compositionally biased region" description="Low complexity" evidence="2">
    <location>
        <begin position="135"/>
        <end position="153"/>
    </location>
</feature>
<feature type="compositionally biased region" description="Polar residues" evidence="2">
    <location>
        <begin position="524"/>
        <end position="539"/>
    </location>
</feature>
<proteinExistence type="inferred from homology"/>
<gene>
    <name type="primary">OCA5</name>
    <name type="ORF">C1Q_00050</name>
</gene>
<reference key="1">
    <citation type="journal article" date="2009" name="Genome Res.">
        <title>Genome structure of a Saccharomyces cerevisiae strain widely used in bioethanol production.</title>
        <authorList>
            <person name="Argueso J.L."/>
            <person name="Carazzolle M.F."/>
            <person name="Mieczkowski P.A."/>
            <person name="Duarte F.M."/>
            <person name="Netto O.V.C."/>
            <person name="Missawa S.K."/>
            <person name="Galzerani F."/>
            <person name="Costa G.G.L."/>
            <person name="Vidal R.O."/>
            <person name="Noronha M.F."/>
            <person name="Dominska M."/>
            <person name="Andrietta M.G.S."/>
            <person name="Andrietta S.R."/>
            <person name="Cunha A.F."/>
            <person name="Gomes L.H."/>
            <person name="Tavares F.C.A."/>
            <person name="Alcarde A.R."/>
            <person name="Dietrich F.S."/>
            <person name="McCusker J.H."/>
            <person name="Petes T.D."/>
            <person name="Pereira G.A.G."/>
        </authorList>
    </citation>
    <scope>NUCLEOTIDE SEQUENCE [LARGE SCALE GENOMIC DNA]</scope>
    <source>
        <strain>JAY291</strain>
    </source>
</reference>